<accession>Q6NRY1</accession>
<accession>A0A8J0TML5</accession>
<accession>A0A8J0TW73</accession>
<accession>A0A8J1LMD3</accession>
<keyword id="KW-0002">3D-structure</keyword>
<keyword id="KW-0025">Alternative splicing</keyword>
<keyword id="KW-0963">Cytoplasm</keyword>
<keyword id="KW-0539">Nucleus</keyword>
<keyword id="KW-1185">Reference proteome</keyword>
<keyword id="KW-0810">Translation regulation</keyword>
<sequence length="379" mass="42733">MRLETMKQTPSSPVNIAMQDSFGCAVENRFQQLLDDESDPLDFLYQSAVEVTHRKKKEEGAAKKNANQKSGKKESQKDRKAVVVGGSTDVKVTQQTGQKRAPKNTEKVTQNENVDSQVKVDRTERRTAFREVRPNIMDRSAEYSIEKPMEIMDQDKQMRNYGGRGGMRGRGRGGFPRNTESDNLRGKREFDRHSGSDRARMRPEDKRGGSGPRNWGSIKEAFSEIEAVPVEEQVETTETEATEEHGKVSEETNDDGFSQEMSLDEWKLLQDQNRSKTELNLRKPETSVPSKAVVIHKSKYKNNISENEEESQYCFRKPVNDITAQLDINFGSLARPSRGRGGGGGRGRVRREEAFPHDVINVLADAPNPDDPEDFPALA</sequence>
<evidence type="ECO:0000250" key="1">
    <source>
        <dbReference type="UniProtKB" id="Q5JVS0"/>
    </source>
</evidence>
<evidence type="ECO:0000250" key="2">
    <source>
        <dbReference type="UniProtKB" id="Q9I9R0"/>
    </source>
</evidence>
<evidence type="ECO:0000256" key="3">
    <source>
        <dbReference type="SAM" id="MobiDB-lite"/>
    </source>
</evidence>
<evidence type="ECO:0000269" key="4">
    <source>
    </source>
</evidence>
<evidence type="ECO:0000305" key="5"/>
<evidence type="ECO:0000312" key="6">
    <source>
        <dbReference type="PDB" id="7OYC"/>
    </source>
</evidence>
<evidence type="ECO:0000312" key="7">
    <source>
        <dbReference type="Xenbase" id="XB-GENE-865923"/>
    </source>
</evidence>
<gene>
    <name evidence="7" type="primary">habp4.S</name>
</gene>
<proteinExistence type="evidence at protein level"/>
<organism>
    <name type="scientific">Xenopus laevis</name>
    <name type="common">African clawed frog</name>
    <dbReference type="NCBI Taxonomy" id="8355"/>
    <lineage>
        <taxon>Eukaryota</taxon>
        <taxon>Metazoa</taxon>
        <taxon>Chordata</taxon>
        <taxon>Craniata</taxon>
        <taxon>Vertebrata</taxon>
        <taxon>Euteleostomi</taxon>
        <taxon>Amphibia</taxon>
        <taxon>Batrachia</taxon>
        <taxon>Anura</taxon>
        <taxon>Pipoidea</taxon>
        <taxon>Pipidae</taxon>
        <taxon>Xenopodinae</taxon>
        <taxon>Xenopus</taxon>
        <taxon>Xenopus</taxon>
    </lineage>
</organism>
<reference key="1">
    <citation type="journal article" date="2016" name="Nature">
        <title>Genome evolution in the allotetraploid frog Xenopus laevis.</title>
        <authorList>
            <person name="Session A.M."/>
            <person name="Uno Y."/>
            <person name="Kwon T."/>
            <person name="Chapman J.A."/>
            <person name="Toyoda A."/>
            <person name="Takahashi S."/>
            <person name="Fukui A."/>
            <person name="Hikosaka A."/>
            <person name="Suzuki A."/>
            <person name="Kondo M."/>
            <person name="van Heeringen S.J."/>
            <person name="Quigley I."/>
            <person name="Heinz S."/>
            <person name="Ogino H."/>
            <person name="Ochi H."/>
            <person name="Hellsten U."/>
            <person name="Lyons J.B."/>
            <person name="Simakov O."/>
            <person name="Putnam N."/>
            <person name="Stites J."/>
            <person name="Kuroki Y."/>
            <person name="Tanaka T."/>
            <person name="Michiue T."/>
            <person name="Watanabe M."/>
            <person name="Bogdanovic O."/>
            <person name="Lister R."/>
            <person name="Georgiou G."/>
            <person name="Paranjpe S.S."/>
            <person name="van Kruijsbergen I."/>
            <person name="Shu S."/>
            <person name="Carlson J."/>
            <person name="Kinoshita T."/>
            <person name="Ohta Y."/>
            <person name="Mawaribuchi S."/>
            <person name="Jenkins J."/>
            <person name="Grimwood J."/>
            <person name="Schmutz J."/>
            <person name="Mitros T."/>
            <person name="Mozaffari S.V."/>
            <person name="Suzuki Y."/>
            <person name="Haramoto Y."/>
            <person name="Yamamoto T.S."/>
            <person name="Takagi C."/>
            <person name="Heald R."/>
            <person name="Miller K."/>
            <person name="Haudenschild C."/>
            <person name="Kitzman J."/>
            <person name="Nakayama T."/>
            <person name="Izutsu Y."/>
            <person name="Robert J."/>
            <person name="Fortriede J."/>
            <person name="Burns K."/>
            <person name="Lotay V."/>
            <person name="Karimi K."/>
            <person name="Yasuoka Y."/>
            <person name="Dichmann D.S."/>
            <person name="Flajnik M.F."/>
            <person name="Houston D.W."/>
            <person name="Shendure J."/>
            <person name="DuPasquier L."/>
            <person name="Vize P.D."/>
            <person name="Zorn A.M."/>
            <person name="Ito M."/>
            <person name="Marcotte E.M."/>
            <person name="Wallingford J.B."/>
            <person name="Ito Y."/>
            <person name="Asashima M."/>
            <person name="Ueno N."/>
            <person name="Matsuda Y."/>
            <person name="Veenstra G.J."/>
            <person name="Fujiyama A."/>
            <person name="Harland R.M."/>
            <person name="Taira M."/>
            <person name="Rokhsar D.S."/>
        </authorList>
    </citation>
    <scope>NUCLEOTIDE SEQUENCE [LARGE SCALE GENOMIC DNA]</scope>
    <source>
        <strain>J</strain>
    </source>
</reference>
<reference key="2">
    <citation type="submission" date="2004-05" db="EMBL/GenBank/DDBJ databases">
        <authorList>
            <consortium name="NIH - Xenopus Gene Collection (XGC) project"/>
        </authorList>
    </citation>
    <scope>NUCLEOTIDE SEQUENCE [LARGE SCALE MRNA]</scope>
    <source>
        <tissue>Ovary</tissue>
    </source>
</reference>
<reference evidence="6" key="3">
    <citation type="journal article" date="2023" name="Nature">
        <title>A molecular network of conserved factors keeps ribosomes dormant in the egg.</title>
        <authorList>
            <person name="Leesch F."/>
            <person name="Lorenzo-Orts L."/>
            <person name="Pribitzer C."/>
            <person name="Grishkovskaya I."/>
            <person name="Roehsner J."/>
            <person name="Chugunova A."/>
            <person name="Matzinger M."/>
            <person name="Roitinger E."/>
            <person name="Belacic K."/>
            <person name="Kandolf S."/>
            <person name="Lin T.Y."/>
            <person name="Mechtler K."/>
            <person name="Meinhart A."/>
            <person name="Haselbach D."/>
            <person name="Pauli A."/>
        </authorList>
    </citation>
    <scope>STRUCTURE BY ELECTRON MICROSCOPY (3.20 ANGSTROMS) IN COMPLEX WITH EEF2 AND RIBOSOME</scope>
    <scope>FUNCTION</scope>
    <scope>INTERACTION WITH EEF2</scope>
    <scope>RIBOSOME-BINDING</scope>
</reference>
<name>HAB4S_XENLA</name>
<comment type="function">
    <text evidence="4">Ribosome-binding protein that promotes ribosome hibernation, a process during which ribosomes are stabilized in an inactive state and preserved from proteasomal degradation (PubMed:36653451). Acts via its association with eef2/eEF2 factor at the A-site of the ribosome, promoting ribosome stabilization in an inactive state compatible with storage (PubMed:36653451). Plays a key role in ribosome hibernation in the mature egg by promoting ribosome stabilization (PubMed:36653451). Ribosomes, which are produced in large quantities during oogenesis, are stored and translationally repressed in the egg and early embryo (PubMed:36653451).</text>
</comment>
<comment type="subunit">
    <text evidence="4">Associates with ribosomes; promoting ribosome stabilization (PubMed:36653451). Interacts with eef2/eEF2; promoting ribosome stabilization (PubMed:36653451).</text>
</comment>
<comment type="subcellular location">
    <subcellularLocation>
        <location evidence="1">Nucleus</location>
    </subcellularLocation>
    <subcellularLocation>
        <location evidence="2">Cytoplasm</location>
    </subcellularLocation>
    <subcellularLocation>
        <location evidence="1">Cytoplasm</location>
        <location evidence="1">Stress granule</location>
    </subcellularLocation>
    <subcellularLocation>
        <location evidence="1">Nucleus</location>
        <location evidence="1">Nucleolus</location>
    </subcellularLocation>
    <subcellularLocation>
        <location evidence="1">Nucleus speckle</location>
    </subcellularLocation>
    <subcellularLocation>
        <location evidence="1">Nucleus</location>
        <location evidence="1">Cajal body</location>
    </subcellularLocation>
    <text evidence="2">Predominantly cytoplasmic.</text>
</comment>
<comment type="alternative products">
    <event type="alternative splicing"/>
    <isoform>
        <id>Q6NRY1-1</id>
        <name>1</name>
        <sequence type="displayed"/>
    </isoform>
    <isoform>
        <id>Q6NRY1-2</id>
        <name>X2</name>
        <sequence type="described" ref="VSP_061930 VSP_061933"/>
    </isoform>
    <isoform>
        <id>Q6NRY1-3</id>
        <name>X1</name>
        <sequence type="described" ref="VSP_061932 VSP_061933"/>
    </isoform>
    <isoform>
        <id>Q6NRY1-4</id>
        <name>X3</name>
        <sequence type="described" ref="VSP_061931 VSP_061933"/>
    </isoform>
</comment>
<comment type="similarity">
    <text evidence="5">Belongs to the SERBP1-HABP4 family.</text>
</comment>
<feature type="chain" id="PRO_0000458233" description="Intracellular hyaluronan-binding protein 4.S">
    <location>
        <begin position="1"/>
        <end position="379"/>
    </location>
</feature>
<feature type="region of interest" description="Disordered" evidence="3">
    <location>
        <begin position="52"/>
        <end position="260"/>
    </location>
</feature>
<feature type="region of interest" description="Disordered" evidence="3">
    <location>
        <begin position="332"/>
        <end position="379"/>
    </location>
</feature>
<feature type="compositionally biased region" description="Basic and acidic residues" evidence="3">
    <location>
        <begin position="71"/>
        <end position="81"/>
    </location>
</feature>
<feature type="compositionally biased region" description="Polar residues" evidence="3">
    <location>
        <begin position="107"/>
        <end position="116"/>
    </location>
</feature>
<feature type="compositionally biased region" description="Basic and acidic residues" evidence="3">
    <location>
        <begin position="118"/>
        <end position="133"/>
    </location>
</feature>
<feature type="compositionally biased region" description="Basic and acidic residues" evidence="3">
    <location>
        <begin position="139"/>
        <end position="158"/>
    </location>
</feature>
<feature type="compositionally biased region" description="Gly residues" evidence="3">
    <location>
        <begin position="162"/>
        <end position="174"/>
    </location>
</feature>
<feature type="compositionally biased region" description="Basic and acidic residues" evidence="3">
    <location>
        <begin position="179"/>
        <end position="208"/>
    </location>
</feature>
<feature type="compositionally biased region" description="Acidic residues" evidence="3">
    <location>
        <begin position="232"/>
        <end position="241"/>
    </location>
</feature>
<feature type="compositionally biased region" description="Acidic residues" evidence="3">
    <location>
        <begin position="368"/>
        <end position="379"/>
    </location>
</feature>
<feature type="splice variant" id="VSP_061930" description="In isoform X2.">
    <location>
        <begin position="1"/>
        <end position="5"/>
    </location>
</feature>
<feature type="splice variant" id="VSP_061931" description="In isoform X3.">
    <location>
        <begin position="200"/>
        <end position="223"/>
    </location>
</feature>
<feature type="splice variant" id="VSP_061932" description="In isoform X1.">
    <location>
        <position position="200"/>
    </location>
</feature>
<feature type="splice variant" id="VSP_061933" description="In isoform X2, isoform X1 and isoform X3.">
    <location>
        <position position="343"/>
    </location>
</feature>
<protein>
    <recommendedName>
        <fullName evidence="5">Intracellular hyaluronan-binding protein 4.S</fullName>
    </recommendedName>
</protein>
<dbReference type="EMBL" id="CM004467">
    <property type="status" value="NOT_ANNOTATED_CDS"/>
    <property type="molecule type" value="Genomic_DNA"/>
</dbReference>
<dbReference type="EMBL" id="BC070578">
    <property type="protein sequence ID" value="AAH70578.1"/>
    <property type="molecule type" value="mRNA"/>
</dbReference>
<dbReference type="RefSeq" id="NP_001084805.1">
    <molecule id="Q6NRY1-1"/>
    <property type="nucleotide sequence ID" value="NM_001091336.1"/>
</dbReference>
<dbReference type="RefSeq" id="XP_018091372.1">
    <molecule id="Q6NRY1-3"/>
    <property type="nucleotide sequence ID" value="XM_018235883.2"/>
</dbReference>
<dbReference type="RefSeq" id="XP_018091381.1">
    <molecule id="Q6NRY1-2"/>
    <property type="nucleotide sequence ID" value="XM_018235892.2"/>
</dbReference>
<dbReference type="RefSeq" id="XP_041430738.1">
    <molecule id="Q6NRY1-4"/>
    <property type="nucleotide sequence ID" value="XM_041574804.1"/>
</dbReference>
<dbReference type="PDB" id="7OYC">
    <property type="method" value="EM"/>
    <property type="resolution" value="2.40 A"/>
    <property type="chains" value="i2=1-379"/>
</dbReference>
<dbReference type="PDBsum" id="7OYC"/>
<dbReference type="IntAct" id="Q6NRY1">
    <property type="interactions" value="1"/>
</dbReference>
<dbReference type="DNASU" id="431846"/>
<dbReference type="GeneID" id="431846"/>
<dbReference type="KEGG" id="xla:431846"/>
<dbReference type="AGR" id="Xenbase:XB-GENE-865923"/>
<dbReference type="CTD" id="431846"/>
<dbReference type="Xenbase" id="XB-GENE-865923">
    <property type="gene designation" value="habp4.S"/>
</dbReference>
<dbReference type="OrthoDB" id="6022699at2759"/>
<dbReference type="CD-CODE" id="78E86D56">
    <property type="entry name" value="Mitochondrial cloud"/>
</dbReference>
<dbReference type="Proteomes" id="UP000186698">
    <property type="component" value="Chromosome 1S"/>
</dbReference>
<dbReference type="Proteomes" id="UP000694892">
    <property type="component" value="Chromosome 1S"/>
</dbReference>
<dbReference type="Bgee" id="431846">
    <property type="expression patterns" value="Expressed in pancreas and 19 other cell types or tissues"/>
</dbReference>
<dbReference type="GO" id="GO:0015030">
    <property type="term" value="C:Cajal body"/>
    <property type="evidence" value="ECO:0007669"/>
    <property type="project" value="UniProtKB-SubCell"/>
</dbReference>
<dbReference type="GO" id="GO:0005737">
    <property type="term" value="C:cytoplasm"/>
    <property type="evidence" value="ECO:0000318"/>
    <property type="project" value="GO_Central"/>
</dbReference>
<dbReference type="GO" id="GO:0010494">
    <property type="term" value="C:cytoplasmic stress granule"/>
    <property type="evidence" value="ECO:0007669"/>
    <property type="project" value="UniProtKB-SubCell"/>
</dbReference>
<dbReference type="GO" id="GO:0016607">
    <property type="term" value="C:nuclear speck"/>
    <property type="evidence" value="ECO:0007669"/>
    <property type="project" value="UniProtKB-SubCell"/>
</dbReference>
<dbReference type="GO" id="GO:0005730">
    <property type="term" value="C:nucleolus"/>
    <property type="evidence" value="ECO:0007669"/>
    <property type="project" value="UniProtKB-SubCell"/>
</dbReference>
<dbReference type="GO" id="GO:0005634">
    <property type="term" value="C:nucleus"/>
    <property type="evidence" value="ECO:0000318"/>
    <property type="project" value="GO_Central"/>
</dbReference>
<dbReference type="GO" id="GO:0043022">
    <property type="term" value="F:ribosome binding"/>
    <property type="evidence" value="ECO:0000314"/>
    <property type="project" value="UniProtKB"/>
</dbReference>
<dbReference type="GO" id="GO:0003723">
    <property type="term" value="F:RNA binding"/>
    <property type="evidence" value="ECO:0000318"/>
    <property type="project" value="GO_Central"/>
</dbReference>
<dbReference type="GO" id="GO:0061770">
    <property type="term" value="F:translation elongation factor binding"/>
    <property type="evidence" value="ECO:0000314"/>
    <property type="project" value="UniProtKB"/>
</dbReference>
<dbReference type="GO" id="GO:0033120">
    <property type="term" value="P:positive regulation of RNA splicing"/>
    <property type="evidence" value="ECO:0000318"/>
    <property type="project" value="GO_Central"/>
</dbReference>
<dbReference type="GO" id="GO:0045948">
    <property type="term" value="P:positive regulation of translational initiation"/>
    <property type="evidence" value="ECO:0000318"/>
    <property type="project" value="GO_Central"/>
</dbReference>
<dbReference type="GO" id="GO:0141014">
    <property type="term" value="P:ribosome hibernation"/>
    <property type="evidence" value="ECO:0000314"/>
    <property type="project" value="UniProtKB"/>
</dbReference>
<dbReference type="InterPro" id="IPR039764">
    <property type="entry name" value="HABP4/SERBP1-like"/>
</dbReference>
<dbReference type="InterPro" id="IPR006861">
    <property type="entry name" value="HABP4_PAIRBP1-bd"/>
</dbReference>
<dbReference type="InterPro" id="IPR032381">
    <property type="entry name" value="IHABP4_N"/>
</dbReference>
<dbReference type="PANTHER" id="PTHR12299">
    <property type="entry name" value="HYALURONIC ACID-BINDING PROTEIN 4"/>
    <property type="match status" value="1"/>
</dbReference>
<dbReference type="PANTHER" id="PTHR12299:SF30">
    <property type="entry name" value="INTRACELLULAR HYALURONAN-BINDING PROTEIN 4"/>
    <property type="match status" value="1"/>
</dbReference>
<dbReference type="Pfam" id="PF04774">
    <property type="entry name" value="HABP4_PAI-RBP1"/>
    <property type="match status" value="1"/>
</dbReference>
<dbReference type="Pfam" id="PF16174">
    <property type="entry name" value="IHABP4_N"/>
    <property type="match status" value="1"/>
</dbReference>
<dbReference type="SMART" id="SM01233">
    <property type="entry name" value="HABP4_PAI-RBP1"/>
    <property type="match status" value="1"/>
</dbReference>